<name>RT12_HUMAN</name>
<evidence type="ECO:0000255" key="1"/>
<evidence type="ECO:0000256" key="2">
    <source>
        <dbReference type="SAM" id="MobiDB-lite"/>
    </source>
</evidence>
<evidence type="ECO:0000269" key="3">
    <source>
    </source>
</evidence>
<evidence type="ECO:0000303" key="4">
    <source>
    </source>
</evidence>
<evidence type="ECO:0000305" key="5"/>
<evidence type="ECO:0007744" key="6">
    <source>
        <dbReference type="PDB" id="3J9M"/>
    </source>
</evidence>
<evidence type="ECO:0007829" key="7">
    <source>
        <dbReference type="PDB" id="8CSQ"/>
    </source>
</evidence>
<evidence type="ECO:0007829" key="8">
    <source>
        <dbReference type="PDB" id="8CSS"/>
    </source>
</evidence>
<reference key="1">
    <citation type="journal article" date="1997" name="Gene">
        <title>Metazoan nuclear genes for mitoribosomal protein S12.</title>
        <authorList>
            <person name="Shah Z.H."/>
            <person name="O'Dell K.M."/>
            <person name="Miller S.C.M."/>
            <person name="An X."/>
            <person name="Jacobs H.T."/>
        </authorList>
    </citation>
    <scope>NUCLEOTIDE SEQUENCE [MRNA]</scope>
    <source>
        <tissue>Liver</tissue>
    </source>
</reference>
<reference key="2">
    <citation type="journal article" date="1998" name="Genomics">
        <title>Characterization of the human mitochondrial ribosomal S12 gene.</title>
        <authorList>
            <person name="Johnson D.F."/>
            <person name="Hamon M."/>
            <person name="Fischel-Ghodsian N."/>
        </authorList>
    </citation>
    <scope>NUCLEOTIDE SEQUENCE [GENOMIC DNA]</scope>
</reference>
<reference key="3">
    <citation type="submission" date="2004-05" db="EMBL/GenBank/DDBJ databases">
        <title>Cloning of human full open reading frames in Gateway(TM) system entry vector (pDONR201).</title>
        <authorList>
            <person name="Ebert L."/>
            <person name="Schick M."/>
            <person name="Neubert P."/>
            <person name="Schatten R."/>
            <person name="Henze S."/>
            <person name="Korn B."/>
        </authorList>
    </citation>
    <scope>NUCLEOTIDE SEQUENCE [LARGE SCALE MRNA]</scope>
</reference>
<reference key="4">
    <citation type="submission" date="2005-07" db="EMBL/GenBank/DDBJ databases">
        <authorList>
            <person name="Mural R.J."/>
            <person name="Istrail S."/>
            <person name="Sutton G.G."/>
            <person name="Florea L."/>
            <person name="Halpern A.L."/>
            <person name="Mobarry C.M."/>
            <person name="Lippert R."/>
            <person name="Walenz B."/>
            <person name="Shatkay H."/>
            <person name="Dew I."/>
            <person name="Miller J.R."/>
            <person name="Flanigan M.J."/>
            <person name="Edwards N.J."/>
            <person name="Bolanos R."/>
            <person name="Fasulo D."/>
            <person name="Halldorsson B.V."/>
            <person name="Hannenhalli S."/>
            <person name="Turner R."/>
            <person name="Yooseph S."/>
            <person name="Lu F."/>
            <person name="Nusskern D.R."/>
            <person name="Shue B.C."/>
            <person name="Zheng X.H."/>
            <person name="Zhong F."/>
            <person name="Delcher A.L."/>
            <person name="Huson D.H."/>
            <person name="Kravitz S.A."/>
            <person name="Mouchard L."/>
            <person name="Reinert K."/>
            <person name="Remington K.A."/>
            <person name="Clark A.G."/>
            <person name="Waterman M.S."/>
            <person name="Eichler E.E."/>
            <person name="Adams M.D."/>
            <person name="Hunkapiller M.W."/>
            <person name="Myers E.W."/>
            <person name="Venter J.C."/>
        </authorList>
    </citation>
    <scope>NUCLEOTIDE SEQUENCE [LARGE SCALE GENOMIC DNA]</scope>
</reference>
<reference key="5">
    <citation type="journal article" date="2004" name="Genome Res.">
        <title>The status, quality, and expansion of the NIH full-length cDNA project: the Mammalian Gene Collection (MGC).</title>
        <authorList>
            <consortium name="The MGC Project Team"/>
        </authorList>
    </citation>
    <scope>NUCLEOTIDE SEQUENCE [LARGE SCALE MRNA]</scope>
    <source>
        <tissue>Brain</tissue>
        <tissue>Colon</tissue>
        <tissue>Skin</tissue>
    </source>
</reference>
<reference key="6">
    <citation type="journal article" date="2011" name="BMC Syst. Biol.">
        <title>Initial characterization of the human central proteome.</title>
        <authorList>
            <person name="Burkard T.R."/>
            <person name="Planyavsky M."/>
            <person name="Kaupe I."/>
            <person name="Breitwieser F.P."/>
            <person name="Buerckstuemmer T."/>
            <person name="Bennett K.L."/>
            <person name="Superti-Furga G."/>
            <person name="Colinge J."/>
        </authorList>
    </citation>
    <scope>IDENTIFICATION BY MASS SPECTROMETRY [LARGE SCALE ANALYSIS]</scope>
</reference>
<reference key="7">
    <citation type="journal article" date="2015" name="Proteomics">
        <title>N-terminome analysis of the human mitochondrial proteome.</title>
        <authorList>
            <person name="Vaca Jacome A.S."/>
            <person name="Rabilloud T."/>
            <person name="Schaeffer-Reiss C."/>
            <person name="Rompais M."/>
            <person name="Ayoub D."/>
            <person name="Lane L."/>
            <person name="Bairoch A."/>
            <person name="Van Dorsselaer A."/>
            <person name="Carapito C."/>
        </authorList>
    </citation>
    <scope>IDENTIFICATION BY MASS SPECTROMETRY [LARGE SCALE ANALYSIS]</scope>
</reference>
<reference evidence="6" key="8">
    <citation type="journal article" date="2015" name="Science">
        <title>Ribosome. The structure of the human mitochondrial ribosome.</title>
        <authorList>
            <person name="Amunts A."/>
            <person name="Brown A."/>
            <person name="Toots J."/>
            <person name="Scheres S.H."/>
            <person name="Ramakrishnan V."/>
        </authorList>
    </citation>
    <scope>STRUCTURE BY ELECTRON MICROSCOPY (3.50 ANGSTROMS)</scope>
    <scope>SUBCELLULAR LOCATION</scope>
    <scope>SUBUNIT</scope>
</reference>
<keyword id="KW-0002">3D-structure</keyword>
<keyword id="KW-0496">Mitochondrion</keyword>
<keyword id="KW-1267">Proteomics identification</keyword>
<keyword id="KW-1185">Reference proteome</keyword>
<keyword id="KW-0687">Ribonucleoprotein</keyword>
<keyword id="KW-0689">Ribosomal protein</keyword>
<keyword id="KW-0809">Transit peptide</keyword>
<organism>
    <name type="scientific">Homo sapiens</name>
    <name type="common">Human</name>
    <dbReference type="NCBI Taxonomy" id="9606"/>
    <lineage>
        <taxon>Eukaryota</taxon>
        <taxon>Metazoa</taxon>
        <taxon>Chordata</taxon>
        <taxon>Craniata</taxon>
        <taxon>Vertebrata</taxon>
        <taxon>Euteleostomi</taxon>
        <taxon>Mammalia</taxon>
        <taxon>Eutheria</taxon>
        <taxon>Euarchontoglires</taxon>
        <taxon>Primates</taxon>
        <taxon>Haplorrhini</taxon>
        <taxon>Catarrhini</taxon>
        <taxon>Hominidae</taxon>
        <taxon>Homo</taxon>
    </lineage>
</organism>
<proteinExistence type="evidence at protein level"/>
<feature type="transit peptide" description="Mitochondrion" evidence="1">
    <location>
        <begin position="1"/>
        <end position="29"/>
    </location>
</feature>
<feature type="chain" id="PRO_0000030606" description="Small ribosomal subunit protein uS12m">
    <location>
        <begin position="30"/>
        <end position="138"/>
    </location>
</feature>
<feature type="region of interest" description="Disordered" evidence="2">
    <location>
        <begin position="36"/>
        <end position="56"/>
    </location>
</feature>
<feature type="sequence variant" id="VAR_051820" description="In dbSNP:rs33988199.">
    <original>H</original>
    <variation>R</variation>
    <location>
        <position position="8"/>
    </location>
</feature>
<feature type="helix" evidence="8">
    <location>
        <begin position="33"/>
        <end position="39"/>
    </location>
</feature>
<feature type="turn" evidence="8">
    <location>
        <begin position="51"/>
        <end position="54"/>
    </location>
</feature>
<feature type="strand" evidence="8">
    <location>
        <begin position="56"/>
        <end position="68"/>
    </location>
</feature>
<feature type="strand" evidence="8">
    <location>
        <begin position="78"/>
        <end position="85"/>
    </location>
</feature>
<feature type="strand" evidence="8">
    <location>
        <begin position="90"/>
        <end position="94"/>
    </location>
</feature>
<feature type="strand" evidence="8">
    <location>
        <begin position="107"/>
        <end position="111"/>
    </location>
</feature>
<feature type="strand" evidence="7">
    <location>
        <begin position="116"/>
        <end position="118"/>
    </location>
</feature>
<feature type="strand" evidence="8">
    <location>
        <begin position="123"/>
        <end position="125"/>
    </location>
</feature>
<accession>O15235</accession>
<accession>Q53X98</accession>
<comment type="subunit">
    <text evidence="3">Component of the mitochondrial small ribosomal subunit (mt-SSU). Mature mammalian 55S mitochondrial ribosomes consist of a small (28S) and a large (39S) subunit. The 28S small subunit contains a 12S ribosomal RNA (12S mt-rRNA) and 30 different proteins. The 39S large subunit contains a 16S rRNA (16S mt-rRNA), a copy of mitochondrial valine transfer RNA (mt-tRNA(Val)), which plays an integral structural role, and 52 different proteins.</text>
</comment>
<comment type="interaction">
    <interactant intactId="EBI-712205">
        <id>O15235</id>
    </interactant>
    <interactant intactId="EBI-1182445">
        <id>P58062</id>
        <label>SPINK7</label>
    </interactant>
    <organismsDiffer>false</organismsDiffer>
    <experiments>3</experiments>
</comment>
<comment type="subcellular location">
    <subcellularLocation>
        <location evidence="3">Mitochondrion</location>
    </subcellularLocation>
</comment>
<comment type="similarity">
    <text evidence="5">Belongs to the universal ribosomal protein uS12 family.</text>
</comment>
<gene>
    <name type="primary">MRPS12</name>
    <name type="synonym">RPMS12</name>
    <name type="synonym">RPSM12</name>
</gene>
<protein>
    <recommendedName>
        <fullName evidence="4">Small ribosomal subunit protein uS12m</fullName>
    </recommendedName>
    <alternativeName>
        <fullName>28S ribosomal protein S12, mitochondrial</fullName>
        <shortName>MRP-S12</shortName>
        <shortName>S12mt</shortName>
    </alternativeName>
    <alternativeName>
        <fullName>MT-RPS12</fullName>
    </alternativeName>
</protein>
<dbReference type="EMBL" id="Y11681">
    <property type="protein sequence ID" value="CAA72377.1"/>
    <property type="molecule type" value="mRNA"/>
</dbReference>
<dbReference type="EMBL" id="AF058761">
    <property type="protein sequence ID" value="AAC64704.1"/>
    <property type="molecule type" value="Genomic_DNA"/>
</dbReference>
<dbReference type="EMBL" id="CR407609">
    <property type="protein sequence ID" value="CAG28537.1"/>
    <property type="molecule type" value="mRNA"/>
</dbReference>
<dbReference type="EMBL" id="CH471126">
    <property type="protein sequence ID" value="EAW56849.1"/>
    <property type="molecule type" value="Genomic_DNA"/>
</dbReference>
<dbReference type="EMBL" id="BC001617">
    <property type="protein sequence ID" value="AAH01617.1"/>
    <property type="molecule type" value="mRNA"/>
</dbReference>
<dbReference type="EMBL" id="BC006424">
    <property type="protein sequence ID" value="AAH06424.1"/>
    <property type="molecule type" value="mRNA"/>
</dbReference>
<dbReference type="EMBL" id="BC007499">
    <property type="protein sequence ID" value="AAH07499.1"/>
    <property type="molecule type" value="mRNA"/>
</dbReference>
<dbReference type="CCDS" id="CCDS12525.1"/>
<dbReference type="RefSeq" id="NP_066930.1">
    <property type="nucleotide sequence ID" value="NM_021107.1"/>
</dbReference>
<dbReference type="RefSeq" id="NP_203526.1">
    <property type="nucleotide sequence ID" value="NM_033362.4"/>
</dbReference>
<dbReference type="RefSeq" id="NP_203527.1">
    <property type="nucleotide sequence ID" value="NM_033363.1"/>
</dbReference>
<dbReference type="PDB" id="3J9M">
    <property type="method" value="EM"/>
    <property type="resolution" value="3.50 A"/>
    <property type="chains" value="AJ=1-138"/>
</dbReference>
<dbReference type="PDB" id="6NU2">
    <property type="method" value="EM"/>
    <property type="resolution" value="3.90 A"/>
    <property type="chains" value="AJ=31-138"/>
</dbReference>
<dbReference type="PDB" id="6NU3">
    <property type="method" value="EM"/>
    <property type="resolution" value="4.40 A"/>
    <property type="chains" value="AJ=1-138"/>
</dbReference>
<dbReference type="PDB" id="6RW4">
    <property type="method" value="EM"/>
    <property type="resolution" value="2.97 A"/>
    <property type="chains" value="J=1-138"/>
</dbReference>
<dbReference type="PDB" id="6RW5">
    <property type="method" value="EM"/>
    <property type="resolution" value="3.14 A"/>
    <property type="chains" value="J=1-138"/>
</dbReference>
<dbReference type="PDB" id="6VLZ">
    <property type="method" value="EM"/>
    <property type="resolution" value="2.97 A"/>
    <property type="chains" value="AJ=1-138"/>
</dbReference>
<dbReference type="PDB" id="6VMI">
    <property type="method" value="EM"/>
    <property type="resolution" value="2.96 A"/>
    <property type="chains" value="AJ=1-138"/>
</dbReference>
<dbReference type="PDB" id="6ZM5">
    <property type="method" value="EM"/>
    <property type="resolution" value="2.89 A"/>
    <property type="chains" value="AJ=1-138"/>
</dbReference>
<dbReference type="PDB" id="6ZM6">
    <property type="method" value="EM"/>
    <property type="resolution" value="2.59 A"/>
    <property type="chains" value="AJ=1-138"/>
</dbReference>
<dbReference type="PDB" id="6ZS9">
    <property type="method" value="EM"/>
    <property type="resolution" value="4.00 A"/>
    <property type="chains" value="AJ=1-138"/>
</dbReference>
<dbReference type="PDB" id="6ZSA">
    <property type="method" value="EM"/>
    <property type="resolution" value="4.00 A"/>
    <property type="chains" value="AJ=1-138"/>
</dbReference>
<dbReference type="PDB" id="6ZSB">
    <property type="method" value="EM"/>
    <property type="resolution" value="4.50 A"/>
    <property type="chains" value="AJ=1-138"/>
</dbReference>
<dbReference type="PDB" id="6ZSC">
    <property type="method" value="EM"/>
    <property type="resolution" value="3.50 A"/>
    <property type="chains" value="AJ=1-138"/>
</dbReference>
<dbReference type="PDB" id="6ZSD">
    <property type="method" value="EM"/>
    <property type="resolution" value="3.70 A"/>
    <property type="chains" value="AJ=1-138"/>
</dbReference>
<dbReference type="PDB" id="6ZSE">
    <property type="method" value="EM"/>
    <property type="resolution" value="5.00 A"/>
    <property type="chains" value="AJ=1-138"/>
</dbReference>
<dbReference type="PDB" id="6ZSG">
    <property type="method" value="EM"/>
    <property type="resolution" value="4.00 A"/>
    <property type="chains" value="AJ=1-138"/>
</dbReference>
<dbReference type="PDB" id="7A5F">
    <property type="method" value="EM"/>
    <property type="resolution" value="4.40 A"/>
    <property type="chains" value="J6=1-138"/>
</dbReference>
<dbReference type="PDB" id="7A5G">
    <property type="method" value="EM"/>
    <property type="resolution" value="4.33 A"/>
    <property type="chains" value="J6=1-138"/>
</dbReference>
<dbReference type="PDB" id="7A5I">
    <property type="method" value="EM"/>
    <property type="resolution" value="3.70 A"/>
    <property type="chains" value="J6=1-138"/>
</dbReference>
<dbReference type="PDB" id="7A5K">
    <property type="method" value="EM"/>
    <property type="resolution" value="3.70 A"/>
    <property type="chains" value="J6=1-138"/>
</dbReference>
<dbReference type="PDB" id="7L08">
    <property type="method" value="EM"/>
    <property type="resolution" value="3.49 A"/>
    <property type="chains" value="AJ=1-138"/>
</dbReference>
<dbReference type="PDB" id="7OG4">
    <property type="method" value="EM"/>
    <property type="resolution" value="3.80 A"/>
    <property type="chains" value="AJ=1-138"/>
</dbReference>
<dbReference type="PDB" id="7P2E">
    <property type="method" value="EM"/>
    <property type="resolution" value="2.40 A"/>
    <property type="chains" value="J=1-138"/>
</dbReference>
<dbReference type="PDB" id="7PNX">
    <property type="method" value="EM"/>
    <property type="resolution" value="2.76 A"/>
    <property type="chains" value="J=1-138"/>
</dbReference>
<dbReference type="PDB" id="7PNY">
    <property type="method" value="EM"/>
    <property type="resolution" value="3.06 A"/>
    <property type="chains" value="J=1-138"/>
</dbReference>
<dbReference type="PDB" id="7PNZ">
    <property type="method" value="EM"/>
    <property type="resolution" value="3.09 A"/>
    <property type="chains" value="J=1-138"/>
</dbReference>
<dbReference type="PDB" id="7PO0">
    <property type="method" value="EM"/>
    <property type="resolution" value="2.90 A"/>
    <property type="chains" value="J=1-138"/>
</dbReference>
<dbReference type="PDB" id="7PO1">
    <property type="method" value="EM"/>
    <property type="resolution" value="2.92 A"/>
    <property type="chains" value="J=1-138"/>
</dbReference>
<dbReference type="PDB" id="7PO2">
    <property type="method" value="EM"/>
    <property type="resolution" value="3.09 A"/>
    <property type="chains" value="J=1-138"/>
</dbReference>
<dbReference type="PDB" id="7PO3">
    <property type="method" value="EM"/>
    <property type="resolution" value="2.92 A"/>
    <property type="chains" value="J=1-138"/>
</dbReference>
<dbReference type="PDB" id="7QI4">
    <property type="method" value="EM"/>
    <property type="resolution" value="2.21 A"/>
    <property type="chains" value="AJ=1-138"/>
</dbReference>
<dbReference type="PDB" id="7QI5">
    <property type="method" value="EM"/>
    <property type="resolution" value="2.63 A"/>
    <property type="chains" value="AJ=1-138"/>
</dbReference>
<dbReference type="PDB" id="7QI6">
    <property type="method" value="EM"/>
    <property type="resolution" value="2.98 A"/>
    <property type="chains" value="AJ=1-138"/>
</dbReference>
<dbReference type="PDB" id="8ANY">
    <property type="method" value="EM"/>
    <property type="resolution" value="2.85 A"/>
    <property type="chains" value="AJ=1-138"/>
</dbReference>
<dbReference type="PDB" id="8CSP">
    <property type="method" value="EM"/>
    <property type="resolution" value="2.66 A"/>
    <property type="chains" value="J=1-138"/>
</dbReference>
<dbReference type="PDB" id="8CSQ">
    <property type="method" value="EM"/>
    <property type="resolution" value="2.54 A"/>
    <property type="chains" value="J=1-138"/>
</dbReference>
<dbReference type="PDB" id="8CSR">
    <property type="method" value="EM"/>
    <property type="resolution" value="2.54 A"/>
    <property type="chains" value="J=1-138"/>
</dbReference>
<dbReference type="PDB" id="8CSS">
    <property type="method" value="EM"/>
    <property type="resolution" value="2.36 A"/>
    <property type="chains" value="J=1-138"/>
</dbReference>
<dbReference type="PDB" id="8CST">
    <property type="method" value="EM"/>
    <property type="resolution" value="2.85 A"/>
    <property type="chains" value="J=1-138"/>
</dbReference>
<dbReference type="PDB" id="8CSU">
    <property type="method" value="EM"/>
    <property type="resolution" value="3.03 A"/>
    <property type="chains" value="J=1-138"/>
</dbReference>
<dbReference type="PDB" id="8K2A">
    <property type="method" value="EM"/>
    <property type="resolution" value="2.90 A"/>
    <property type="chains" value="SL=1-138"/>
</dbReference>
<dbReference type="PDB" id="8OIR">
    <property type="method" value="EM"/>
    <property type="resolution" value="3.10 A"/>
    <property type="chains" value="AJ=1-138"/>
</dbReference>
<dbReference type="PDB" id="8OIS">
    <property type="method" value="EM"/>
    <property type="resolution" value="3.00 A"/>
    <property type="chains" value="AJ=1-138"/>
</dbReference>
<dbReference type="PDB" id="8QRK">
    <property type="method" value="EM"/>
    <property type="resolution" value="6.69 A"/>
    <property type="chains" value="J=1-138"/>
</dbReference>
<dbReference type="PDB" id="8QRL">
    <property type="method" value="EM"/>
    <property type="resolution" value="3.34 A"/>
    <property type="chains" value="J=1-138"/>
</dbReference>
<dbReference type="PDB" id="8QRM">
    <property type="method" value="EM"/>
    <property type="resolution" value="3.05 A"/>
    <property type="chains" value="J=1-138"/>
</dbReference>
<dbReference type="PDB" id="8QRN">
    <property type="method" value="EM"/>
    <property type="resolution" value="2.98 A"/>
    <property type="chains" value="J=1-138"/>
</dbReference>
<dbReference type="PDB" id="8RRI">
    <property type="method" value="EM"/>
    <property type="resolution" value="2.40 A"/>
    <property type="chains" value="AJ=1-138"/>
</dbReference>
<dbReference type="PDB" id="8XT0">
    <property type="method" value="EM"/>
    <property type="resolution" value="3.20 A"/>
    <property type="chains" value="SL=1-138"/>
</dbReference>
<dbReference type="PDB" id="8XT2">
    <property type="method" value="EM"/>
    <property type="resolution" value="3.30 A"/>
    <property type="chains" value="SL=1-138"/>
</dbReference>
<dbReference type="PDBsum" id="3J9M"/>
<dbReference type="PDBsum" id="6NU2"/>
<dbReference type="PDBsum" id="6NU3"/>
<dbReference type="PDBsum" id="6RW4"/>
<dbReference type="PDBsum" id="6RW5"/>
<dbReference type="PDBsum" id="6VLZ"/>
<dbReference type="PDBsum" id="6VMI"/>
<dbReference type="PDBsum" id="6ZM5"/>
<dbReference type="PDBsum" id="6ZM6"/>
<dbReference type="PDBsum" id="6ZS9"/>
<dbReference type="PDBsum" id="6ZSA"/>
<dbReference type="PDBsum" id="6ZSB"/>
<dbReference type="PDBsum" id="6ZSC"/>
<dbReference type="PDBsum" id="6ZSD"/>
<dbReference type="PDBsum" id="6ZSE"/>
<dbReference type="PDBsum" id="6ZSG"/>
<dbReference type="PDBsum" id="7A5F"/>
<dbReference type="PDBsum" id="7A5G"/>
<dbReference type="PDBsum" id="7A5I"/>
<dbReference type="PDBsum" id="7A5K"/>
<dbReference type="PDBsum" id="7L08"/>
<dbReference type="PDBsum" id="7OG4"/>
<dbReference type="PDBsum" id="7P2E"/>
<dbReference type="PDBsum" id="7PNX"/>
<dbReference type="PDBsum" id="7PNY"/>
<dbReference type="PDBsum" id="7PNZ"/>
<dbReference type="PDBsum" id="7PO0"/>
<dbReference type="PDBsum" id="7PO1"/>
<dbReference type="PDBsum" id="7PO2"/>
<dbReference type="PDBsum" id="7PO3"/>
<dbReference type="PDBsum" id="7QI4"/>
<dbReference type="PDBsum" id="7QI5"/>
<dbReference type="PDBsum" id="7QI6"/>
<dbReference type="PDBsum" id="8ANY"/>
<dbReference type="PDBsum" id="8CSP"/>
<dbReference type="PDBsum" id="8CSQ"/>
<dbReference type="PDBsum" id="8CSR"/>
<dbReference type="PDBsum" id="8CSS"/>
<dbReference type="PDBsum" id="8CST"/>
<dbReference type="PDBsum" id="8CSU"/>
<dbReference type="PDBsum" id="8K2A"/>
<dbReference type="PDBsum" id="8OIR"/>
<dbReference type="PDBsum" id="8OIS"/>
<dbReference type="PDBsum" id="8QRK"/>
<dbReference type="PDBsum" id="8QRL"/>
<dbReference type="PDBsum" id="8QRM"/>
<dbReference type="PDBsum" id="8QRN"/>
<dbReference type="PDBsum" id="8RRI"/>
<dbReference type="PDBsum" id="8XT0"/>
<dbReference type="PDBsum" id="8XT2"/>
<dbReference type="EMDB" id="EMD-0514"/>
<dbReference type="EMDB" id="EMD-0515"/>
<dbReference type="EMDB" id="EMD-10021"/>
<dbReference type="EMDB" id="EMD-10022"/>
<dbReference type="EMDB" id="EMD-11278"/>
<dbReference type="EMDB" id="EMD-11279"/>
<dbReference type="EMDB" id="EMD-11390"/>
<dbReference type="EMDB" id="EMD-11391"/>
<dbReference type="EMDB" id="EMD-11392"/>
<dbReference type="EMDB" id="EMD-11393"/>
<dbReference type="EMDB" id="EMD-11394"/>
<dbReference type="EMDB" id="EMD-11395"/>
<dbReference type="EMDB" id="EMD-11397"/>
<dbReference type="EMDB" id="EMD-11641"/>
<dbReference type="EMDB" id="EMD-11642"/>
<dbReference type="EMDB" id="EMD-11644"/>
<dbReference type="EMDB" id="EMD-11646"/>
<dbReference type="EMDB" id="EMD-12877"/>
<dbReference type="EMDB" id="EMD-13170"/>
<dbReference type="EMDB" id="EMD-13555"/>
<dbReference type="EMDB" id="EMD-13556"/>
<dbReference type="EMDB" id="EMD-13557"/>
<dbReference type="EMDB" id="EMD-13558"/>
<dbReference type="EMDB" id="EMD-13559"/>
<dbReference type="EMDB" id="EMD-13560"/>
<dbReference type="EMDB" id="EMD-13561"/>
<dbReference type="EMDB" id="EMD-13980"/>
<dbReference type="EMDB" id="EMD-13981"/>
<dbReference type="EMDB" id="EMD-13982"/>
<dbReference type="EMDB" id="EMD-15544"/>
<dbReference type="EMDB" id="EMD-16897"/>
<dbReference type="EMDB" id="EMD-16898"/>
<dbReference type="EMDB" id="EMD-19460"/>
<dbReference type="EMDB" id="EMD-21233"/>
<dbReference type="EMDB" id="EMD-21242"/>
<dbReference type="EMDB" id="EMD-23096"/>
<dbReference type="EMDB" id="EMD-26966"/>
<dbReference type="EMDB" id="EMD-26967"/>
<dbReference type="EMDB" id="EMD-26968"/>
<dbReference type="EMDB" id="EMD-26969"/>
<dbReference type="EMDB" id="EMD-26970"/>
<dbReference type="EMDB" id="EMD-26971"/>
<dbReference type="EMDB" id="EMD-36836"/>
<dbReference type="EMDB" id="EMD-38632"/>
<dbReference type="EMDB" id="EMD-38634"/>
<dbReference type="SMR" id="O15235"/>
<dbReference type="BioGRID" id="112098">
    <property type="interactions" value="277"/>
</dbReference>
<dbReference type="ComplexPortal" id="CPX-5225">
    <property type="entry name" value="28S mitochondrial small ribosomal subunit"/>
</dbReference>
<dbReference type="CORUM" id="O15235"/>
<dbReference type="FunCoup" id="O15235">
    <property type="interactions" value="560"/>
</dbReference>
<dbReference type="IntAct" id="O15235">
    <property type="interactions" value="56"/>
</dbReference>
<dbReference type="MINT" id="O15235"/>
<dbReference type="STRING" id="9606.ENSP00000384952"/>
<dbReference type="GlyGen" id="O15235">
    <property type="glycosylation" value="1 site"/>
</dbReference>
<dbReference type="iPTMnet" id="O15235"/>
<dbReference type="PhosphoSitePlus" id="O15235"/>
<dbReference type="SwissPalm" id="O15235"/>
<dbReference type="BioMuta" id="MRPS12"/>
<dbReference type="jPOST" id="O15235"/>
<dbReference type="MassIVE" id="O15235"/>
<dbReference type="PaxDb" id="9606-ENSP00000384952"/>
<dbReference type="PeptideAtlas" id="O15235"/>
<dbReference type="ProteomicsDB" id="48529"/>
<dbReference type="Pumba" id="O15235"/>
<dbReference type="TopDownProteomics" id="O15235"/>
<dbReference type="Antibodypedia" id="30241">
    <property type="antibodies" value="181 antibodies from 26 providers"/>
</dbReference>
<dbReference type="DNASU" id="6183"/>
<dbReference type="Ensembl" id="ENST00000308018.9">
    <property type="protein sequence ID" value="ENSP00000308845.3"/>
    <property type="gene ID" value="ENSG00000128626.12"/>
</dbReference>
<dbReference type="Ensembl" id="ENST00000402029.3">
    <property type="protein sequence ID" value="ENSP00000384579.2"/>
    <property type="gene ID" value="ENSG00000128626.12"/>
</dbReference>
<dbReference type="Ensembl" id="ENST00000407800.2">
    <property type="protein sequence ID" value="ENSP00000384952.1"/>
    <property type="gene ID" value="ENSG00000128626.12"/>
</dbReference>
<dbReference type="Ensembl" id="ENST00000634246.1">
    <property type="protein sequence ID" value="ENSP00000488926.1"/>
    <property type="gene ID" value="ENSG00000283018.1"/>
</dbReference>
<dbReference type="Ensembl" id="ENST00000634400.1">
    <property type="protein sequence ID" value="ENSP00000489467.1"/>
    <property type="gene ID" value="ENSG00000283018.1"/>
</dbReference>
<dbReference type="Ensembl" id="ENST00000634704.1">
    <property type="protein sequence ID" value="ENSP00000489374.1"/>
    <property type="gene ID" value="ENSG00000283018.1"/>
</dbReference>
<dbReference type="GeneID" id="6183"/>
<dbReference type="KEGG" id="hsa:6183"/>
<dbReference type="MANE-Select" id="ENST00000308018.9">
    <property type="protein sequence ID" value="ENSP00000308845.3"/>
    <property type="RefSeq nucleotide sequence ID" value="NM_033362.4"/>
    <property type="RefSeq protein sequence ID" value="NP_203526.1"/>
</dbReference>
<dbReference type="UCSC" id="uc002okc.4">
    <property type="organism name" value="human"/>
</dbReference>
<dbReference type="AGR" id="HGNC:10380"/>
<dbReference type="CTD" id="6183"/>
<dbReference type="DisGeNET" id="6183"/>
<dbReference type="GeneCards" id="MRPS12"/>
<dbReference type="HGNC" id="HGNC:10380">
    <property type="gene designation" value="MRPS12"/>
</dbReference>
<dbReference type="HPA" id="ENSG00000128626">
    <property type="expression patterns" value="Low tissue specificity"/>
</dbReference>
<dbReference type="MIM" id="603021">
    <property type="type" value="gene"/>
</dbReference>
<dbReference type="neXtProt" id="NX_O15235"/>
<dbReference type="OpenTargets" id="ENSG00000128626"/>
<dbReference type="PharmGKB" id="PA30996"/>
<dbReference type="VEuPathDB" id="HostDB:ENSG00000128626"/>
<dbReference type="eggNOG" id="KOG1750">
    <property type="taxonomic scope" value="Eukaryota"/>
</dbReference>
<dbReference type="GeneTree" id="ENSGT00550000075103"/>
<dbReference type="HOGENOM" id="CLU_104295_3_1_1"/>
<dbReference type="InParanoid" id="O15235"/>
<dbReference type="OMA" id="MHRQGPP"/>
<dbReference type="OrthoDB" id="361013at2759"/>
<dbReference type="PAN-GO" id="O15235">
    <property type="GO annotations" value="3 GO annotations based on evolutionary models"/>
</dbReference>
<dbReference type="PhylomeDB" id="O15235"/>
<dbReference type="TreeFam" id="TF315095"/>
<dbReference type="PathwayCommons" id="O15235"/>
<dbReference type="Reactome" id="R-HSA-5368286">
    <property type="pathway name" value="Mitochondrial translation initiation"/>
</dbReference>
<dbReference type="Reactome" id="R-HSA-5389840">
    <property type="pathway name" value="Mitochondrial translation elongation"/>
</dbReference>
<dbReference type="Reactome" id="R-HSA-5419276">
    <property type="pathway name" value="Mitochondrial translation termination"/>
</dbReference>
<dbReference type="SignaLink" id="O15235"/>
<dbReference type="SIGNOR" id="O15235"/>
<dbReference type="BioGRID-ORCS" id="6183">
    <property type="hits" value="441 hits in 1166 CRISPR screens"/>
</dbReference>
<dbReference type="ChiTaRS" id="MRPS12">
    <property type="organism name" value="human"/>
</dbReference>
<dbReference type="GeneWiki" id="MRPS12"/>
<dbReference type="GenomeRNAi" id="6183"/>
<dbReference type="Pharos" id="O15235">
    <property type="development level" value="Tbio"/>
</dbReference>
<dbReference type="PRO" id="PR:O15235"/>
<dbReference type="Proteomes" id="UP000005640">
    <property type="component" value="Chromosome 19"/>
</dbReference>
<dbReference type="RNAct" id="O15235">
    <property type="molecule type" value="protein"/>
</dbReference>
<dbReference type="Bgee" id="ENSG00000128626">
    <property type="expression patterns" value="Expressed in apex of heart and 99 other cell types or tissues"/>
</dbReference>
<dbReference type="ExpressionAtlas" id="O15235">
    <property type="expression patterns" value="baseline and differential"/>
</dbReference>
<dbReference type="GO" id="GO:0005743">
    <property type="term" value="C:mitochondrial inner membrane"/>
    <property type="evidence" value="ECO:0000304"/>
    <property type="project" value="Reactome"/>
</dbReference>
<dbReference type="GO" id="GO:0005761">
    <property type="term" value="C:mitochondrial ribosome"/>
    <property type="evidence" value="ECO:0000304"/>
    <property type="project" value="ProtInc"/>
</dbReference>
<dbReference type="GO" id="GO:0005763">
    <property type="term" value="C:mitochondrial small ribosomal subunit"/>
    <property type="evidence" value="ECO:0000314"/>
    <property type="project" value="UniProtKB"/>
</dbReference>
<dbReference type="GO" id="GO:0005739">
    <property type="term" value="C:mitochondrion"/>
    <property type="evidence" value="ECO:0006056"/>
    <property type="project" value="FlyBase"/>
</dbReference>
<dbReference type="GO" id="GO:0005840">
    <property type="term" value="C:ribosome"/>
    <property type="evidence" value="ECO:0000318"/>
    <property type="project" value="GO_Central"/>
</dbReference>
<dbReference type="GO" id="GO:0003723">
    <property type="term" value="F:RNA binding"/>
    <property type="evidence" value="ECO:0007005"/>
    <property type="project" value="UniProtKB"/>
</dbReference>
<dbReference type="GO" id="GO:0003735">
    <property type="term" value="F:structural constituent of ribosome"/>
    <property type="evidence" value="ECO:0000250"/>
    <property type="project" value="UniProtKB"/>
</dbReference>
<dbReference type="GO" id="GO:0032543">
    <property type="term" value="P:mitochondrial translation"/>
    <property type="evidence" value="ECO:0000250"/>
    <property type="project" value="UniProtKB"/>
</dbReference>
<dbReference type="GO" id="GO:0006412">
    <property type="term" value="P:translation"/>
    <property type="evidence" value="ECO:0000318"/>
    <property type="project" value="GO_Central"/>
</dbReference>
<dbReference type="CDD" id="cd03368">
    <property type="entry name" value="Ribosomal_S12"/>
    <property type="match status" value="1"/>
</dbReference>
<dbReference type="FunFam" id="2.40.50.140:FF:000115">
    <property type="entry name" value="28S ribosomal protein S12, mitochondrial"/>
    <property type="match status" value="1"/>
</dbReference>
<dbReference type="Gene3D" id="2.40.50.140">
    <property type="entry name" value="Nucleic acid-binding proteins"/>
    <property type="match status" value="1"/>
</dbReference>
<dbReference type="InterPro" id="IPR012340">
    <property type="entry name" value="NA-bd_OB-fold"/>
</dbReference>
<dbReference type="InterPro" id="IPR006032">
    <property type="entry name" value="Ribosomal_uS12"/>
</dbReference>
<dbReference type="InterPro" id="IPR005679">
    <property type="entry name" value="Ribosomal_uS12_bac"/>
</dbReference>
<dbReference type="NCBIfam" id="TIGR00981">
    <property type="entry name" value="rpsL_bact"/>
    <property type="match status" value="1"/>
</dbReference>
<dbReference type="PANTHER" id="PTHR11652">
    <property type="entry name" value="30S RIBOSOMAL PROTEIN S12 FAMILY MEMBER"/>
    <property type="match status" value="1"/>
</dbReference>
<dbReference type="Pfam" id="PF00164">
    <property type="entry name" value="Ribosom_S12_S23"/>
    <property type="match status" value="1"/>
</dbReference>
<dbReference type="PRINTS" id="PR01034">
    <property type="entry name" value="RIBOSOMALS12"/>
</dbReference>
<dbReference type="SUPFAM" id="SSF50249">
    <property type="entry name" value="Nucleic acid-binding proteins"/>
    <property type="match status" value="1"/>
</dbReference>
<dbReference type="PROSITE" id="PS00055">
    <property type="entry name" value="RIBOSOMAL_S12"/>
    <property type="match status" value="1"/>
</dbReference>
<sequence>MSWSGLLHGLNTSLTCGPALVPRLWATCSMATLNQMHRLGPPKRPPRKLGPTEGRPQLKGVVLCTFTRKPKKPNSANRKCCRVRLSTGREAVCFIPGEGHTLQEHQIVLVEGGRTQDLPGVKLTVVRGKYDCGHVQKK</sequence>